<reference key="1">
    <citation type="journal article" date="1995" name="Infect. Immun.">
        <title>Protein Hpn: cloning and characterization of a histidine-rich metal-binding polypeptide in Helicobacter pylori and Helicobacter mustelae.</title>
        <authorList>
            <person name="Gilbert J.V."/>
            <person name="Ramakrishna J."/>
            <person name="Sunderman F.W. Jr."/>
            <person name="Wright A."/>
            <person name="Plaut A.G."/>
        </authorList>
    </citation>
    <scope>NUCLEOTIDE SEQUENCE [GENOMIC DNA]</scope>
    <scope>PROTEIN SEQUENCE OF 2-19 AND 48-60</scope>
    <source>
        <strain>LEU</strain>
    </source>
</reference>
<reference key="2">
    <citation type="journal article" date="1997" name="Nature">
        <title>The complete genome sequence of the gastric pathogen Helicobacter pylori.</title>
        <authorList>
            <person name="Tomb J.-F."/>
            <person name="White O."/>
            <person name="Kerlavage A.R."/>
            <person name="Clayton R.A."/>
            <person name="Sutton G.G."/>
            <person name="Fleischmann R.D."/>
            <person name="Ketchum K.A."/>
            <person name="Klenk H.-P."/>
            <person name="Gill S.R."/>
            <person name="Dougherty B.A."/>
            <person name="Nelson K.E."/>
            <person name="Quackenbush J."/>
            <person name="Zhou L."/>
            <person name="Kirkness E.F."/>
            <person name="Peterson S.N."/>
            <person name="Loftus B.J."/>
            <person name="Richardson D.L."/>
            <person name="Dodson R.J."/>
            <person name="Khalak H.G."/>
            <person name="Glodek A."/>
            <person name="McKenney K."/>
            <person name="FitzGerald L.M."/>
            <person name="Lee N."/>
            <person name="Adams M.D."/>
            <person name="Hickey E.K."/>
            <person name="Berg D.E."/>
            <person name="Gocayne J.D."/>
            <person name="Utterback T.R."/>
            <person name="Peterson J.D."/>
            <person name="Kelley J.M."/>
            <person name="Cotton M.D."/>
            <person name="Weidman J.F."/>
            <person name="Fujii C."/>
            <person name="Bowman C."/>
            <person name="Watthey L."/>
            <person name="Wallin E."/>
            <person name="Hayes W.S."/>
            <person name="Borodovsky M."/>
            <person name="Karp P.D."/>
            <person name="Smith H.O."/>
            <person name="Fraser C.M."/>
            <person name="Venter J.C."/>
        </authorList>
    </citation>
    <scope>NUCLEOTIDE SEQUENCE [LARGE SCALE GENOMIC DNA]</scope>
    <source>
        <strain>ATCC 700392 / 26695</strain>
    </source>
</reference>
<name>HPN_HELPY</name>
<feature type="initiator methionine" description="Removed" evidence="2">
    <location>
        <position position="1"/>
    </location>
</feature>
<feature type="chain" id="PRO_0000084044" description="Histidine-rich metal-binding polypeptide">
    <location>
        <begin position="2"/>
        <end position="60"/>
    </location>
</feature>
<feature type="repeat" description="1">
    <location>
        <begin position="38"/>
        <end position="42"/>
    </location>
</feature>
<feature type="repeat" description="2">
    <location>
        <begin position="51"/>
        <end position="55"/>
    </location>
</feature>
<feature type="region of interest" description="Disordered" evidence="1">
    <location>
        <begin position="1"/>
        <end position="60"/>
    </location>
</feature>
<feature type="region of interest" description="2 X 5 AA repeats of E-E-G-C-C">
    <location>
        <begin position="38"/>
        <end position="55"/>
    </location>
</feature>
<feature type="compositionally biased region" description="Basic residues" evidence="1">
    <location>
        <begin position="10"/>
        <end position="35"/>
    </location>
</feature>
<feature type="compositionally biased region" description="Basic and acidic residues" evidence="1">
    <location>
        <begin position="36"/>
        <end position="60"/>
    </location>
</feature>
<comment type="function">
    <text>Strongly binds nickel and zinc. Binds other metals less strongly: cobalt &gt; copper &gt; cadmium &gt; manganese. May act to increase, or at least to preserve, urease activity. Exact function is still unknown.</text>
</comment>
<comment type="interaction">
    <interactant intactId="EBI-7512037">
        <id>P0A0V6</id>
    </interactant>
    <interactant intactId="EBI-7500169">
        <id>O25772</id>
        <label>HP_1157</label>
    </interactant>
    <organismsDiffer>false</organismsDiffer>
    <experiments>3</experiments>
</comment>
<keyword id="KW-0903">Direct protein sequencing</keyword>
<keyword id="KW-0479">Metal-binding</keyword>
<keyword id="KW-0533">Nickel</keyword>
<keyword id="KW-1185">Reference proteome</keyword>
<keyword id="KW-0677">Repeat</keyword>
<keyword id="KW-0862">Zinc</keyword>
<sequence>MAHHEEQHGGHHHHHHHTHHHHYHGGEHHHHHHSSHHEEGCCSTSDSHHQEEGCCHGHHE</sequence>
<evidence type="ECO:0000256" key="1">
    <source>
        <dbReference type="SAM" id="MobiDB-lite"/>
    </source>
</evidence>
<evidence type="ECO:0000269" key="2">
    <source>
    </source>
</evidence>
<proteinExistence type="evidence at protein level"/>
<gene>
    <name type="primary">hpn</name>
    <name type="ordered locus">HP_1427</name>
</gene>
<dbReference type="EMBL" id="U26361">
    <property type="protein sequence ID" value="AAA85859.1"/>
    <property type="molecule type" value="Genomic_DNA"/>
</dbReference>
<dbReference type="EMBL" id="AE000511">
    <property type="protein sequence ID" value="AAD08471.1"/>
    <property type="molecule type" value="Genomic_DNA"/>
</dbReference>
<dbReference type="PIR" id="C64698">
    <property type="entry name" value="C64698"/>
</dbReference>
<dbReference type="IntAct" id="P0A0V6">
    <property type="interactions" value="16"/>
</dbReference>
<dbReference type="MINT" id="P0A0V6"/>
<dbReference type="EnsemblBacteria" id="AAD08471">
    <property type="protein sequence ID" value="AAD08471"/>
    <property type="gene ID" value="HP_1427"/>
</dbReference>
<dbReference type="KEGG" id="heo:C694_07380"/>
<dbReference type="KEGG" id="hpy:HP_1427"/>
<dbReference type="InParanoid" id="P0A0V6"/>
<dbReference type="PHI-base" id="PHI:5425"/>
<dbReference type="Proteomes" id="UP000000429">
    <property type="component" value="Chromosome"/>
</dbReference>
<dbReference type="GO" id="GO:0046872">
    <property type="term" value="F:metal ion binding"/>
    <property type="evidence" value="ECO:0007669"/>
    <property type="project" value="UniProtKB-KW"/>
</dbReference>
<dbReference type="InterPro" id="IPR049950">
    <property type="entry name" value="Hpn-like"/>
</dbReference>
<dbReference type="NCBIfam" id="NF033705">
    <property type="entry name" value="helico_Hpn"/>
    <property type="match status" value="1"/>
</dbReference>
<accession>P0A0V6</accession>
<accession>Q48251</accession>
<protein>
    <recommendedName>
        <fullName>Histidine-rich metal-binding polypeptide</fullName>
    </recommendedName>
</protein>
<organism>
    <name type="scientific">Helicobacter pylori (strain ATCC 700392 / 26695)</name>
    <name type="common">Campylobacter pylori</name>
    <dbReference type="NCBI Taxonomy" id="85962"/>
    <lineage>
        <taxon>Bacteria</taxon>
        <taxon>Pseudomonadati</taxon>
        <taxon>Campylobacterota</taxon>
        <taxon>Epsilonproteobacteria</taxon>
        <taxon>Campylobacterales</taxon>
        <taxon>Helicobacteraceae</taxon>
        <taxon>Helicobacter</taxon>
    </lineage>
</organism>